<reference key="1">
    <citation type="journal article" date="2005" name="Proc. Natl. Acad. Sci. U.S.A.">
        <title>Comparison of the complete genome sequences of Pseudomonas syringae pv. syringae B728a and pv. tomato DC3000.</title>
        <authorList>
            <person name="Feil H."/>
            <person name="Feil W.S."/>
            <person name="Chain P."/>
            <person name="Larimer F."/>
            <person name="Dibartolo G."/>
            <person name="Copeland A."/>
            <person name="Lykidis A."/>
            <person name="Trong S."/>
            <person name="Nolan M."/>
            <person name="Goltsman E."/>
            <person name="Thiel J."/>
            <person name="Malfatti S."/>
            <person name="Loper J.E."/>
            <person name="Lapidus A."/>
            <person name="Detter J.C."/>
            <person name="Land M."/>
            <person name="Richardson P.M."/>
            <person name="Kyrpides N.C."/>
            <person name="Ivanova N."/>
            <person name="Lindow S.E."/>
        </authorList>
    </citation>
    <scope>NUCLEOTIDE SEQUENCE [LARGE SCALE GENOMIC DNA]</scope>
    <source>
        <strain>B728a</strain>
    </source>
</reference>
<keyword id="KW-0963">Cytoplasm</keyword>
<keyword id="KW-0521">NADP</keyword>
<keyword id="KW-0560">Oxidoreductase</keyword>
<keyword id="KW-0671">Queuosine biosynthesis</keyword>
<evidence type="ECO:0000255" key="1">
    <source>
        <dbReference type="HAMAP-Rule" id="MF_00817"/>
    </source>
</evidence>
<evidence type="ECO:0000305" key="2"/>
<sequence>MHPAAEHSPLGKSSEYIATYTPSLLFPIPRAAKWAELGLTAQTLPYQGVDFWNCYELSWLLPSGKPVVAIGEFSIPAESPNIIESKSFKLYLNSLNQTAFATVEQLQTTLEQDLSAAAGKPVGVRIRSLAEIEEEGVAALPGVCIDDLDISVSSYDRPQPELLCCDDSRVVAESVHSHLLKSNCPVTSQPDWGSVVVEYRGAALDHASLLAYIVSFRQHSDFHEQCVERIFLDLQRLLKPEKLTVYARYVRRGGLDINPYRSTETLDVDNRRLARQ</sequence>
<accession>Q4ZV71</accession>
<organism>
    <name type="scientific">Pseudomonas syringae pv. syringae (strain B728a)</name>
    <dbReference type="NCBI Taxonomy" id="205918"/>
    <lineage>
        <taxon>Bacteria</taxon>
        <taxon>Pseudomonadati</taxon>
        <taxon>Pseudomonadota</taxon>
        <taxon>Gammaproteobacteria</taxon>
        <taxon>Pseudomonadales</taxon>
        <taxon>Pseudomonadaceae</taxon>
        <taxon>Pseudomonas</taxon>
        <taxon>Pseudomonas syringae</taxon>
    </lineage>
</organism>
<name>QUEF_PSEU2</name>
<comment type="function">
    <text evidence="1">Catalyzes the NADPH-dependent reduction of 7-cyano-7-deazaguanine (preQ0) to 7-aminomethyl-7-deazaguanine (preQ1).</text>
</comment>
<comment type="catalytic activity">
    <reaction evidence="1">
        <text>7-aminomethyl-7-carbaguanine + 2 NADP(+) = 7-cyano-7-deazaguanine + 2 NADPH + 3 H(+)</text>
        <dbReference type="Rhea" id="RHEA:13409"/>
        <dbReference type="ChEBI" id="CHEBI:15378"/>
        <dbReference type="ChEBI" id="CHEBI:45075"/>
        <dbReference type="ChEBI" id="CHEBI:57783"/>
        <dbReference type="ChEBI" id="CHEBI:58349"/>
        <dbReference type="ChEBI" id="CHEBI:58703"/>
        <dbReference type="EC" id="1.7.1.13"/>
    </reaction>
</comment>
<comment type="pathway">
    <text evidence="1">tRNA modification; tRNA-queuosine biosynthesis.</text>
</comment>
<comment type="subunit">
    <text evidence="1">Homodimer.</text>
</comment>
<comment type="subcellular location">
    <subcellularLocation>
        <location evidence="1">Cytoplasm</location>
    </subcellularLocation>
</comment>
<comment type="similarity">
    <text evidence="1">Belongs to the GTP cyclohydrolase I family. QueF type 2 subfamily.</text>
</comment>
<comment type="sequence caution" evidence="2">
    <conflict type="erroneous initiation">
        <sequence resource="EMBL-CDS" id="AAY36951"/>
    </conflict>
</comment>
<proteinExistence type="inferred from homology"/>
<dbReference type="EC" id="1.7.1.13" evidence="1"/>
<dbReference type="EMBL" id="CP000075">
    <property type="protein sequence ID" value="AAY36951.1"/>
    <property type="status" value="ALT_INIT"/>
    <property type="molecule type" value="Genomic_DNA"/>
</dbReference>
<dbReference type="RefSeq" id="WP_011267308.1">
    <property type="nucleotide sequence ID" value="NC_007005.1"/>
</dbReference>
<dbReference type="RefSeq" id="YP_234989.2">
    <property type="nucleotide sequence ID" value="NC_007005.1"/>
</dbReference>
<dbReference type="SMR" id="Q4ZV71"/>
<dbReference type="STRING" id="205918.Psyr_1907"/>
<dbReference type="KEGG" id="psb:Psyr_1907"/>
<dbReference type="PATRIC" id="fig|205918.7.peg.1951"/>
<dbReference type="eggNOG" id="COG0780">
    <property type="taxonomic scope" value="Bacteria"/>
</dbReference>
<dbReference type="eggNOG" id="COG2904">
    <property type="taxonomic scope" value="Bacteria"/>
</dbReference>
<dbReference type="HOGENOM" id="CLU_054738_0_0_6"/>
<dbReference type="OrthoDB" id="9789995at2"/>
<dbReference type="UniPathway" id="UPA00392"/>
<dbReference type="Proteomes" id="UP000000426">
    <property type="component" value="Chromosome"/>
</dbReference>
<dbReference type="GO" id="GO:0005737">
    <property type="term" value="C:cytoplasm"/>
    <property type="evidence" value="ECO:0007669"/>
    <property type="project" value="UniProtKB-SubCell"/>
</dbReference>
<dbReference type="GO" id="GO:0033739">
    <property type="term" value="F:preQ1 synthase activity"/>
    <property type="evidence" value="ECO:0007669"/>
    <property type="project" value="UniProtKB-UniRule"/>
</dbReference>
<dbReference type="GO" id="GO:0008616">
    <property type="term" value="P:queuosine biosynthetic process"/>
    <property type="evidence" value="ECO:0007669"/>
    <property type="project" value="UniProtKB-UniRule"/>
</dbReference>
<dbReference type="GO" id="GO:0006400">
    <property type="term" value="P:tRNA modification"/>
    <property type="evidence" value="ECO:0007669"/>
    <property type="project" value="UniProtKB-UniRule"/>
</dbReference>
<dbReference type="Gene3D" id="3.30.1130.10">
    <property type="match status" value="2"/>
</dbReference>
<dbReference type="HAMAP" id="MF_00817">
    <property type="entry name" value="QueF_type2"/>
    <property type="match status" value="1"/>
</dbReference>
<dbReference type="InterPro" id="IPR043133">
    <property type="entry name" value="GTP-CH-I_C/QueF"/>
</dbReference>
<dbReference type="InterPro" id="IPR050084">
    <property type="entry name" value="NADPH_dep_7-cyano-7-deazaG_red"/>
</dbReference>
<dbReference type="InterPro" id="IPR029500">
    <property type="entry name" value="QueF"/>
</dbReference>
<dbReference type="InterPro" id="IPR029139">
    <property type="entry name" value="QueF_N"/>
</dbReference>
<dbReference type="InterPro" id="IPR016428">
    <property type="entry name" value="QueF_type2"/>
</dbReference>
<dbReference type="NCBIfam" id="TIGR03138">
    <property type="entry name" value="QueF"/>
    <property type="match status" value="1"/>
</dbReference>
<dbReference type="PANTHER" id="PTHR34354">
    <property type="entry name" value="NADPH-DEPENDENT 7-CYANO-7-DEAZAGUANINE REDUCTASE"/>
    <property type="match status" value="1"/>
</dbReference>
<dbReference type="PANTHER" id="PTHR34354:SF1">
    <property type="entry name" value="NADPH-DEPENDENT 7-CYANO-7-DEAZAGUANINE REDUCTASE"/>
    <property type="match status" value="1"/>
</dbReference>
<dbReference type="Pfam" id="PF14489">
    <property type="entry name" value="QueF"/>
    <property type="match status" value="1"/>
</dbReference>
<dbReference type="Pfam" id="PF14819">
    <property type="entry name" value="QueF_N"/>
    <property type="match status" value="1"/>
</dbReference>
<dbReference type="PIRSF" id="PIRSF004750">
    <property type="entry name" value="Nitrile_oxidored_YqcD_prd"/>
    <property type="match status" value="1"/>
</dbReference>
<dbReference type="SUPFAM" id="SSF55620">
    <property type="entry name" value="Tetrahydrobiopterin biosynthesis enzymes-like"/>
    <property type="match status" value="1"/>
</dbReference>
<gene>
    <name evidence="1" type="primary">queF</name>
    <name type="ordered locus">Psyr_1907</name>
</gene>
<protein>
    <recommendedName>
        <fullName evidence="1">NADPH-dependent 7-cyano-7-deazaguanine reductase</fullName>
        <ecNumber evidence="1">1.7.1.13</ecNumber>
    </recommendedName>
    <alternativeName>
        <fullName evidence="1">7-cyano-7-carbaguanine reductase</fullName>
    </alternativeName>
    <alternativeName>
        <fullName evidence="1">NADPH-dependent nitrile oxidoreductase</fullName>
    </alternativeName>
    <alternativeName>
        <fullName evidence="1">PreQ(0) reductase</fullName>
    </alternativeName>
</protein>
<feature type="chain" id="PRO_0000163048" description="NADPH-dependent 7-cyano-7-deazaguanine reductase">
    <location>
        <begin position="1"/>
        <end position="276"/>
    </location>
</feature>
<feature type="active site" description="Thioimide intermediate" evidence="1">
    <location>
        <position position="184"/>
    </location>
</feature>
<feature type="active site" description="Proton donor" evidence="1">
    <location>
        <position position="191"/>
    </location>
</feature>
<feature type="binding site" evidence="1">
    <location>
        <begin position="83"/>
        <end position="85"/>
    </location>
    <ligand>
        <name>substrate</name>
    </ligand>
</feature>
<feature type="binding site" evidence="1">
    <location>
        <begin position="85"/>
        <end position="86"/>
    </location>
    <ligand>
        <name>NADPH</name>
        <dbReference type="ChEBI" id="CHEBI:57783"/>
    </ligand>
</feature>
<feature type="binding site" evidence="1">
    <location>
        <begin position="223"/>
        <end position="224"/>
    </location>
    <ligand>
        <name>substrate</name>
    </ligand>
</feature>
<feature type="binding site" evidence="1">
    <location>
        <begin position="252"/>
        <end position="253"/>
    </location>
    <ligand>
        <name>NADPH</name>
        <dbReference type="ChEBI" id="CHEBI:57783"/>
    </ligand>
</feature>